<name>HEM1_SALTI</name>
<evidence type="ECO:0000255" key="1">
    <source>
        <dbReference type="HAMAP-Rule" id="MF_00087"/>
    </source>
</evidence>
<feature type="chain" id="PRO_0000114063" description="Glutamyl-tRNA reductase">
    <location>
        <begin position="1"/>
        <end position="418"/>
    </location>
</feature>
<feature type="active site" description="Nucleophile" evidence="1">
    <location>
        <position position="50"/>
    </location>
</feature>
<feature type="binding site" evidence="1">
    <location>
        <begin position="49"/>
        <end position="52"/>
    </location>
    <ligand>
        <name>substrate</name>
    </ligand>
</feature>
<feature type="binding site" evidence="1">
    <location>
        <position position="109"/>
    </location>
    <ligand>
        <name>substrate</name>
    </ligand>
</feature>
<feature type="binding site" evidence="1">
    <location>
        <begin position="114"/>
        <end position="116"/>
    </location>
    <ligand>
        <name>substrate</name>
    </ligand>
</feature>
<feature type="binding site" evidence="1">
    <location>
        <position position="120"/>
    </location>
    <ligand>
        <name>substrate</name>
    </ligand>
</feature>
<feature type="binding site" evidence="1">
    <location>
        <begin position="189"/>
        <end position="194"/>
    </location>
    <ligand>
        <name>NADP(+)</name>
        <dbReference type="ChEBI" id="CHEBI:58349"/>
    </ligand>
</feature>
<feature type="site" description="Important for activity" evidence="1">
    <location>
        <position position="99"/>
    </location>
</feature>
<reference key="1">
    <citation type="journal article" date="2001" name="Nature">
        <title>Complete genome sequence of a multiple drug resistant Salmonella enterica serovar Typhi CT18.</title>
        <authorList>
            <person name="Parkhill J."/>
            <person name="Dougan G."/>
            <person name="James K.D."/>
            <person name="Thomson N.R."/>
            <person name="Pickard D."/>
            <person name="Wain J."/>
            <person name="Churcher C.M."/>
            <person name="Mungall K.L."/>
            <person name="Bentley S.D."/>
            <person name="Holden M.T.G."/>
            <person name="Sebaihia M."/>
            <person name="Baker S."/>
            <person name="Basham D."/>
            <person name="Brooks K."/>
            <person name="Chillingworth T."/>
            <person name="Connerton P."/>
            <person name="Cronin A."/>
            <person name="Davis P."/>
            <person name="Davies R.M."/>
            <person name="Dowd L."/>
            <person name="White N."/>
            <person name="Farrar J."/>
            <person name="Feltwell T."/>
            <person name="Hamlin N."/>
            <person name="Haque A."/>
            <person name="Hien T.T."/>
            <person name="Holroyd S."/>
            <person name="Jagels K."/>
            <person name="Krogh A."/>
            <person name="Larsen T.S."/>
            <person name="Leather S."/>
            <person name="Moule S."/>
            <person name="O'Gaora P."/>
            <person name="Parry C."/>
            <person name="Quail M.A."/>
            <person name="Rutherford K.M."/>
            <person name="Simmonds M."/>
            <person name="Skelton J."/>
            <person name="Stevens K."/>
            <person name="Whitehead S."/>
            <person name="Barrell B.G."/>
        </authorList>
    </citation>
    <scope>NUCLEOTIDE SEQUENCE [LARGE SCALE GENOMIC DNA]</scope>
    <source>
        <strain>CT18</strain>
    </source>
</reference>
<reference key="2">
    <citation type="journal article" date="2003" name="J. Bacteriol.">
        <title>Comparative genomics of Salmonella enterica serovar Typhi strains Ty2 and CT18.</title>
        <authorList>
            <person name="Deng W."/>
            <person name="Liou S.-R."/>
            <person name="Plunkett G. III"/>
            <person name="Mayhew G.F."/>
            <person name="Rose D.J."/>
            <person name="Burland V."/>
            <person name="Kodoyianni V."/>
            <person name="Schwartz D.C."/>
            <person name="Blattner F.R."/>
        </authorList>
    </citation>
    <scope>NUCLEOTIDE SEQUENCE [LARGE SCALE GENOMIC DNA]</scope>
    <source>
        <strain>ATCC 700931 / Ty2</strain>
    </source>
</reference>
<protein>
    <recommendedName>
        <fullName evidence="1">Glutamyl-tRNA reductase</fullName>
        <shortName evidence="1">GluTR</shortName>
        <ecNumber evidence="1">1.2.1.70</ecNumber>
    </recommendedName>
</protein>
<dbReference type="EC" id="1.2.1.70" evidence="1"/>
<dbReference type="EMBL" id="AL513382">
    <property type="protein sequence ID" value="CAD02132.1"/>
    <property type="molecule type" value="Genomic_DNA"/>
</dbReference>
<dbReference type="EMBL" id="AE014613">
    <property type="protein sequence ID" value="AAO68762.1"/>
    <property type="molecule type" value="Genomic_DNA"/>
</dbReference>
<dbReference type="RefSeq" id="NP_456287.1">
    <property type="nucleotide sequence ID" value="NC_003198.1"/>
</dbReference>
<dbReference type="RefSeq" id="WP_000173208.1">
    <property type="nucleotide sequence ID" value="NZ_WSUR01000004.1"/>
</dbReference>
<dbReference type="SMR" id="P0A1Q7"/>
<dbReference type="STRING" id="220341.gene:17585826"/>
<dbReference type="KEGG" id="stt:t1099"/>
<dbReference type="KEGG" id="sty:STY1902"/>
<dbReference type="PATRIC" id="fig|220341.7.peg.1916"/>
<dbReference type="eggNOG" id="COG0373">
    <property type="taxonomic scope" value="Bacteria"/>
</dbReference>
<dbReference type="HOGENOM" id="CLU_035113_2_2_6"/>
<dbReference type="OMA" id="FAFKCAA"/>
<dbReference type="OrthoDB" id="110209at2"/>
<dbReference type="UniPathway" id="UPA00251">
    <property type="reaction ID" value="UER00316"/>
</dbReference>
<dbReference type="Proteomes" id="UP000000541">
    <property type="component" value="Chromosome"/>
</dbReference>
<dbReference type="Proteomes" id="UP000002670">
    <property type="component" value="Chromosome"/>
</dbReference>
<dbReference type="GO" id="GO:0008883">
    <property type="term" value="F:glutamyl-tRNA reductase activity"/>
    <property type="evidence" value="ECO:0007669"/>
    <property type="project" value="UniProtKB-UniRule"/>
</dbReference>
<dbReference type="GO" id="GO:0050661">
    <property type="term" value="F:NADP binding"/>
    <property type="evidence" value="ECO:0007669"/>
    <property type="project" value="InterPro"/>
</dbReference>
<dbReference type="GO" id="GO:0019353">
    <property type="term" value="P:protoporphyrinogen IX biosynthetic process from glutamate"/>
    <property type="evidence" value="ECO:0007669"/>
    <property type="project" value="TreeGrafter"/>
</dbReference>
<dbReference type="CDD" id="cd05213">
    <property type="entry name" value="NAD_bind_Glutamyl_tRNA_reduct"/>
    <property type="match status" value="1"/>
</dbReference>
<dbReference type="FunFam" id="3.30.460.30:FF:000001">
    <property type="entry name" value="Glutamyl-tRNA reductase"/>
    <property type="match status" value="1"/>
</dbReference>
<dbReference type="FunFam" id="3.40.50.720:FF:000031">
    <property type="entry name" value="Glutamyl-tRNA reductase"/>
    <property type="match status" value="1"/>
</dbReference>
<dbReference type="Gene3D" id="3.30.460.30">
    <property type="entry name" value="Glutamyl-tRNA reductase, N-terminal domain"/>
    <property type="match status" value="1"/>
</dbReference>
<dbReference type="Gene3D" id="3.40.50.720">
    <property type="entry name" value="NAD(P)-binding Rossmann-like Domain"/>
    <property type="match status" value="1"/>
</dbReference>
<dbReference type="HAMAP" id="MF_00087">
    <property type="entry name" value="Glu_tRNA_reductase"/>
    <property type="match status" value="1"/>
</dbReference>
<dbReference type="InterPro" id="IPR000343">
    <property type="entry name" value="4pyrrol_synth_GluRdtase"/>
</dbReference>
<dbReference type="InterPro" id="IPR015896">
    <property type="entry name" value="4pyrrol_synth_GluRdtase_dimer"/>
</dbReference>
<dbReference type="InterPro" id="IPR015895">
    <property type="entry name" value="4pyrrol_synth_GluRdtase_N"/>
</dbReference>
<dbReference type="InterPro" id="IPR018214">
    <property type="entry name" value="GluRdtase_CS"/>
</dbReference>
<dbReference type="InterPro" id="IPR036453">
    <property type="entry name" value="GluRdtase_dimer_dom_sf"/>
</dbReference>
<dbReference type="InterPro" id="IPR036343">
    <property type="entry name" value="GluRdtase_N_sf"/>
</dbReference>
<dbReference type="InterPro" id="IPR036291">
    <property type="entry name" value="NAD(P)-bd_dom_sf"/>
</dbReference>
<dbReference type="InterPro" id="IPR006151">
    <property type="entry name" value="Shikm_DH/Glu-tRNA_Rdtase"/>
</dbReference>
<dbReference type="NCBIfam" id="TIGR01035">
    <property type="entry name" value="hemA"/>
    <property type="match status" value="1"/>
</dbReference>
<dbReference type="PANTHER" id="PTHR43013">
    <property type="entry name" value="GLUTAMYL-TRNA REDUCTASE"/>
    <property type="match status" value="1"/>
</dbReference>
<dbReference type="PANTHER" id="PTHR43013:SF1">
    <property type="entry name" value="GLUTAMYL-TRNA REDUCTASE"/>
    <property type="match status" value="1"/>
</dbReference>
<dbReference type="Pfam" id="PF00745">
    <property type="entry name" value="GlutR_dimer"/>
    <property type="match status" value="1"/>
</dbReference>
<dbReference type="Pfam" id="PF05201">
    <property type="entry name" value="GlutR_N"/>
    <property type="match status" value="1"/>
</dbReference>
<dbReference type="Pfam" id="PF01488">
    <property type="entry name" value="Shikimate_DH"/>
    <property type="match status" value="1"/>
</dbReference>
<dbReference type="PIRSF" id="PIRSF000445">
    <property type="entry name" value="4pyrrol_synth_GluRdtase"/>
    <property type="match status" value="1"/>
</dbReference>
<dbReference type="SUPFAM" id="SSF69742">
    <property type="entry name" value="Glutamyl tRNA-reductase catalytic, N-terminal domain"/>
    <property type="match status" value="1"/>
</dbReference>
<dbReference type="SUPFAM" id="SSF69075">
    <property type="entry name" value="Glutamyl tRNA-reductase dimerization domain"/>
    <property type="match status" value="1"/>
</dbReference>
<dbReference type="SUPFAM" id="SSF51735">
    <property type="entry name" value="NAD(P)-binding Rossmann-fold domains"/>
    <property type="match status" value="1"/>
</dbReference>
<dbReference type="PROSITE" id="PS00747">
    <property type="entry name" value="GLUTR"/>
    <property type="match status" value="1"/>
</dbReference>
<accession>P0A1Q7</accession>
<accession>P13581</accession>
<organism>
    <name type="scientific">Salmonella typhi</name>
    <dbReference type="NCBI Taxonomy" id="90370"/>
    <lineage>
        <taxon>Bacteria</taxon>
        <taxon>Pseudomonadati</taxon>
        <taxon>Pseudomonadota</taxon>
        <taxon>Gammaproteobacteria</taxon>
        <taxon>Enterobacterales</taxon>
        <taxon>Enterobacteriaceae</taxon>
        <taxon>Salmonella</taxon>
    </lineage>
</organism>
<sequence length="418" mass="46105">MTLLALGINHKTAPVSLRERVTFSPDTLDQALDSLLAQPMVQGGVVLSTCNRTELYLSVEEQDNLQEALIRWLCDYHNLNEDDLRNSLYWHQDNDAVSHLMRVASGLDSLVLGEPQILGQVKKAFADSQKGHLNASALERMFQKSFSVAKRVRTETDIGASAVSVAFAACTLARQIFESLSTVTVLLVGAGETIELVARHLREHKVQKMIIANRTRERAQALADEVGAEVISLSDIDARLQDADIIISSTASPLPIIGKGMVERALKSRRNQPMLLVDIAVPRDVEPEVGKLANAYLYSVDDLQSIISHNLAQRQAAAVEAETIVEQEASEFMAWLRAQGASETIREYRSQSEQIRDELTTKALSALQQGGDAQAILQDLAWKLTNRLIHAPTKSLQQAARDGDDERLNILRDSLGLE</sequence>
<proteinExistence type="inferred from homology"/>
<gene>
    <name evidence="1" type="primary">hemA</name>
    <name type="ordered locus">STY1902</name>
    <name type="ordered locus">t1099</name>
</gene>
<keyword id="KW-0521">NADP</keyword>
<keyword id="KW-0560">Oxidoreductase</keyword>
<keyword id="KW-0627">Porphyrin biosynthesis</keyword>
<comment type="function">
    <text evidence="1">Catalyzes the NADPH-dependent reduction of glutamyl-tRNA(Glu) to glutamate 1-semialdehyde (GSA).</text>
</comment>
<comment type="catalytic activity">
    <reaction evidence="1">
        <text>(S)-4-amino-5-oxopentanoate + tRNA(Glu) + NADP(+) = L-glutamyl-tRNA(Glu) + NADPH + H(+)</text>
        <dbReference type="Rhea" id="RHEA:12344"/>
        <dbReference type="Rhea" id="RHEA-COMP:9663"/>
        <dbReference type="Rhea" id="RHEA-COMP:9680"/>
        <dbReference type="ChEBI" id="CHEBI:15378"/>
        <dbReference type="ChEBI" id="CHEBI:57501"/>
        <dbReference type="ChEBI" id="CHEBI:57783"/>
        <dbReference type="ChEBI" id="CHEBI:58349"/>
        <dbReference type="ChEBI" id="CHEBI:78442"/>
        <dbReference type="ChEBI" id="CHEBI:78520"/>
        <dbReference type="EC" id="1.2.1.70"/>
    </reaction>
</comment>
<comment type="pathway">
    <text evidence="1">Porphyrin-containing compound metabolism; protoporphyrin-IX biosynthesis; 5-aminolevulinate from L-glutamyl-tRNA(Glu): step 1/2.</text>
</comment>
<comment type="subunit">
    <text evidence="1">Homodimer.</text>
</comment>
<comment type="domain">
    <text evidence="1">Possesses an unusual extended V-shaped dimeric structure with each monomer consisting of three distinct domains arranged along a curved 'spinal' alpha-helix. The N-terminal catalytic domain specifically recognizes the glutamate moiety of the substrate. The second domain is the NADPH-binding domain, and the third C-terminal domain is responsible for dimerization.</text>
</comment>
<comment type="miscellaneous">
    <text evidence="1">During catalysis, the active site Cys acts as a nucleophile attacking the alpha-carbonyl group of tRNA-bound glutamate with the formation of a thioester intermediate between enzyme and glutamate, and the concomitant release of tRNA(Glu). The thioester intermediate is finally reduced by direct hydride transfer from NADPH, to form the product GSA.</text>
</comment>
<comment type="similarity">
    <text evidence="1">Belongs to the glutamyl-tRNA reductase family.</text>
</comment>